<name>ENO_SALPA</name>
<comment type="function">
    <text evidence="2">Catalyzes the reversible conversion of 2-phosphoglycerate (2-PG) into phosphoenolpyruvate (PEP). It is essential for the degradation of carbohydrates via glycolysis.</text>
</comment>
<comment type="catalytic activity">
    <reaction evidence="2">
        <text>(2R)-2-phosphoglycerate = phosphoenolpyruvate + H2O</text>
        <dbReference type="Rhea" id="RHEA:10164"/>
        <dbReference type="ChEBI" id="CHEBI:15377"/>
        <dbReference type="ChEBI" id="CHEBI:58289"/>
        <dbReference type="ChEBI" id="CHEBI:58702"/>
        <dbReference type="EC" id="4.2.1.11"/>
    </reaction>
</comment>
<comment type="cofactor">
    <cofactor evidence="2">
        <name>Mg(2+)</name>
        <dbReference type="ChEBI" id="CHEBI:18420"/>
    </cofactor>
    <text evidence="2">Binds a second Mg(2+) ion via substrate during catalysis.</text>
</comment>
<comment type="pathway">
    <text evidence="2">Carbohydrate degradation; glycolysis; pyruvate from D-glyceraldehyde 3-phosphate: step 4/5.</text>
</comment>
<comment type="subunit">
    <text evidence="2">Component of the RNA degradosome, a multiprotein complex involved in RNA processing and mRNA degradation.</text>
</comment>
<comment type="subcellular location">
    <subcellularLocation>
        <location evidence="2">Cytoplasm</location>
    </subcellularLocation>
    <subcellularLocation>
        <location evidence="2">Secreted</location>
    </subcellularLocation>
    <subcellularLocation>
        <location evidence="2">Cell surface</location>
    </subcellularLocation>
    <text evidence="2">Fractions of enolase are present in both the cytoplasm and on the cell surface.</text>
</comment>
<comment type="similarity">
    <text evidence="2">Belongs to the enolase family.</text>
</comment>
<protein>
    <recommendedName>
        <fullName evidence="2">Enolase</fullName>
        <ecNumber evidence="2">4.2.1.11</ecNumber>
    </recommendedName>
    <alternativeName>
        <fullName evidence="2">2-phospho-D-glycerate hydro-lyase</fullName>
    </alternativeName>
    <alternativeName>
        <fullName evidence="2">2-phosphoglycerate dehydratase</fullName>
    </alternativeName>
</protein>
<proteinExistence type="inferred from homology"/>
<evidence type="ECO:0000250" key="1"/>
<evidence type="ECO:0000255" key="2">
    <source>
        <dbReference type="HAMAP-Rule" id="MF_00318"/>
    </source>
</evidence>
<sequence length="432" mass="45599">MSKIVKVIGREIIDSRGNPTVEAEVHLEGGFVGMAAAPSGASTGSREALELRDGDKSRFLGKGVTKAVGAVNGPIAQAILGKDAKDQAGIDKIMIDLDGTENKSNFGANAILAVSLANAKAAAAAKGMPLYEHIAELNGTPGKYSMPVPMMNIINGGEHADNNVDIQEFMIQPVGAKTVKEAIRMGSEVFHHLAKVLKGKGMNTAVGDEGGYAPNLGSNAEALAVIAEAVKAAGYELGKDITLAMDCAASEFYKDGKYVLAGEGNKAFTSEEFTHFLEELTKQYPIVSIEDGLDESDWDGFAYQTKVLGDKIQLVGDDLFVTNTKILKEGIEKGIANSILIKFNQIGSLTETLAAIKMAKDAGYTAVISHRSGETEDATIADLAVGTAAGQIKTGSMSRSDRVAKYNQLIRIEEALGEKAPYNGRKEIKGQA</sequence>
<dbReference type="EC" id="4.2.1.11" evidence="2"/>
<dbReference type="EMBL" id="CP000026">
    <property type="protein sequence ID" value="AAV78659.1"/>
    <property type="molecule type" value="Genomic_DNA"/>
</dbReference>
<dbReference type="RefSeq" id="WP_000036734.1">
    <property type="nucleotide sequence ID" value="NC_006511.1"/>
</dbReference>
<dbReference type="SMR" id="Q5PEH4"/>
<dbReference type="GeneID" id="66757270"/>
<dbReference type="KEGG" id="spt:SPA2809"/>
<dbReference type="HOGENOM" id="CLU_031223_2_1_6"/>
<dbReference type="UniPathway" id="UPA00109">
    <property type="reaction ID" value="UER00187"/>
</dbReference>
<dbReference type="Proteomes" id="UP000008185">
    <property type="component" value="Chromosome"/>
</dbReference>
<dbReference type="GO" id="GO:0009986">
    <property type="term" value="C:cell surface"/>
    <property type="evidence" value="ECO:0007669"/>
    <property type="project" value="UniProtKB-SubCell"/>
</dbReference>
<dbReference type="GO" id="GO:0005576">
    <property type="term" value="C:extracellular region"/>
    <property type="evidence" value="ECO:0007669"/>
    <property type="project" value="UniProtKB-SubCell"/>
</dbReference>
<dbReference type="GO" id="GO:0000015">
    <property type="term" value="C:phosphopyruvate hydratase complex"/>
    <property type="evidence" value="ECO:0007669"/>
    <property type="project" value="InterPro"/>
</dbReference>
<dbReference type="GO" id="GO:0000287">
    <property type="term" value="F:magnesium ion binding"/>
    <property type="evidence" value="ECO:0007669"/>
    <property type="project" value="UniProtKB-UniRule"/>
</dbReference>
<dbReference type="GO" id="GO:0004634">
    <property type="term" value="F:phosphopyruvate hydratase activity"/>
    <property type="evidence" value="ECO:0007669"/>
    <property type="project" value="UniProtKB-UniRule"/>
</dbReference>
<dbReference type="GO" id="GO:0006096">
    <property type="term" value="P:glycolytic process"/>
    <property type="evidence" value="ECO:0007669"/>
    <property type="project" value="UniProtKB-UniRule"/>
</dbReference>
<dbReference type="CDD" id="cd03313">
    <property type="entry name" value="enolase"/>
    <property type="match status" value="1"/>
</dbReference>
<dbReference type="FunFam" id="3.20.20.120:FF:000001">
    <property type="entry name" value="Enolase"/>
    <property type="match status" value="1"/>
</dbReference>
<dbReference type="FunFam" id="3.30.390.10:FF:000001">
    <property type="entry name" value="Enolase"/>
    <property type="match status" value="1"/>
</dbReference>
<dbReference type="Gene3D" id="3.20.20.120">
    <property type="entry name" value="Enolase-like C-terminal domain"/>
    <property type="match status" value="1"/>
</dbReference>
<dbReference type="Gene3D" id="3.30.390.10">
    <property type="entry name" value="Enolase-like, N-terminal domain"/>
    <property type="match status" value="1"/>
</dbReference>
<dbReference type="HAMAP" id="MF_00318">
    <property type="entry name" value="Enolase"/>
    <property type="match status" value="1"/>
</dbReference>
<dbReference type="InterPro" id="IPR000941">
    <property type="entry name" value="Enolase"/>
</dbReference>
<dbReference type="InterPro" id="IPR036849">
    <property type="entry name" value="Enolase-like_C_sf"/>
</dbReference>
<dbReference type="InterPro" id="IPR029017">
    <property type="entry name" value="Enolase-like_N"/>
</dbReference>
<dbReference type="InterPro" id="IPR020810">
    <property type="entry name" value="Enolase_C"/>
</dbReference>
<dbReference type="InterPro" id="IPR020809">
    <property type="entry name" value="Enolase_CS"/>
</dbReference>
<dbReference type="InterPro" id="IPR020811">
    <property type="entry name" value="Enolase_N"/>
</dbReference>
<dbReference type="NCBIfam" id="TIGR01060">
    <property type="entry name" value="eno"/>
    <property type="match status" value="1"/>
</dbReference>
<dbReference type="PANTHER" id="PTHR11902">
    <property type="entry name" value="ENOLASE"/>
    <property type="match status" value="1"/>
</dbReference>
<dbReference type="PANTHER" id="PTHR11902:SF1">
    <property type="entry name" value="ENOLASE"/>
    <property type="match status" value="1"/>
</dbReference>
<dbReference type="Pfam" id="PF00113">
    <property type="entry name" value="Enolase_C"/>
    <property type="match status" value="1"/>
</dbReference>
<dbReference type="Pfam" id="PF03952">
    <property type="entry name" value="Enolase_N"/>
    <property type="match status" value="1"/>
</dbReference>
<dbReference type="PIRSF" id="PIRSF001400">
    <property type="entry name" value="Enolase"/>
    <property type="match status" value="1"/>
</dbReference>
<dbReference type="PRINTS" id="PR00148">
    <property type="entry name" value="ENOLASE"/>
</dbReference>
<dbReference type="SFLD" id="SFLDF00002">
    <property type="entry name" value="enolase"/>
    <property type="match status" value="1"/>
</dbReference>
<dbReference type="SFLD" id="SFLDG00178">
    <property type="entry name" value="enolase"/>
    <property type="match status" value="1"/>
</dbReference>
<dbReference type="SMART" id="SM01192">
    <property type="entry name" value="Enolase_C"/>
    <property type="match status" value="1"/>
</dbReference>
<dbReference type="SMART" id="SM01193">
    <property type="entry name" value="Enolase_N"/>
    <property type="match status" value="1"/>
</dbReference>
<dbReference type="SUPFAM" id="SSF51604">
    <property type="entry name" value="Enolase C-terminal domain-like"/>
    <property type="match status" value="1"/>
</dbReference>
<dbReference type="SUPFAM" id="SSF54826">
    <property type="entry name" value="Enolase N-terminal domain-like"/>
    <property type="match status" value="1"/>
</dbReference>
<dbReference type="PROSITE" id="PS00164">
    <property type="entry name" value="ENOLASE"/>
    <property type="match status" value="1"/>
</dbReference>
<reference key="1">
    <citation type="journal article" date="2004" name="Nat. Genet.">
        <title>Comparison of genome degradation in Paratyphi A and Typhi, human-restricted serovars of Salmonella enterica that cause typhoid.</title>
        <authorList>
            <person name="McClelland M."/>
            <person name="Sanderson K.E."/>
            <person name="Clifton S.W."/>
            <person name="Latreille P."/>
            <person name="Porwollik S."/>
            <person name="Sabo A."/>
            <person name="Meyer R."/>
            <person name="Bieri T."/>
            <person name="Ozersky P."/>
            <person name="McLellan M."/>
            <person name="Harkins C.R."/>
            <person name="Wang C."/>
            <person name="Nguyen C."/>
            <person name="Berghoff A."/>
            <person name="Elliott G."/>
            <person name="Kohlberg S."/>
            <person name="Strong C."/>
            <person name="Du F."/>
            <person name="Carter J."/>
            <person name="Kremizki C."/>
            <person name="Layman D."/>
            <person name="Leonard S."/>
            <person name="Sun H."/>
            <person name="Fulton L."/>
            <person name="Nash W."/>
            <person name="Miner T."/>
            <person name="Minx P."/>
            <person name="Delehaunty K."/>
            <person name="Fronick C."/>
            <person name="Magrini V."/>
            <person name="Nhan M."/>
            <person name="Warren W."/>
            <person name="Florea L."/>
            <person name="Spieth J."/>
            <person name="Wilson R.K."/>
        </authorList>
    </citation>
    <scope>NUCLEOTIDE SEQUENCE [LARGE SCALE GENOMIC DNA]</scope>
    <source>
        <strain>ATCC 9150 / SARB42</strain>
    </source>
</reference>
<accession>Q5PEH4</accession>
<organism>
    <name type="scientific">Salmonella paratyphi A (strain ATCC 9150 / SARB42)</name>
    <dbReference type="NCBI Taxonomy" id="295319"/>
    <lineage>
        <taxon>Bacteria</taxon>
        <taxon>Pseudomonadati</taxon>
        <taxon>Pseudomonadota</taxon>
        <taxon>Gammaproteobacteria</taxon>
        <taxon>Enterobacterales</taxon>
        <taxon>Enterobacteriaceae</taxon>
        <taxon>Salmonella</taxon>
    </lineage>
</organism>
<keyword id="KW-0963">Cytoplasm</keyword>
<keyword id="KW-0324">Glycolysis</keyword>
<keyword id="KW-0456">Lyase</keyword>
<keyword id="KW-0460">Magnesium</keyword>
<keyword id="KW-0479">Metal-binding</keyword>
<keyword id="KW-0964">Secreted</keyword>
<gene>
    <name evidence="2" type="primary">eno</name>
    <name type="ordered locus">SPA2809</name>
</gene>
<feature type="initiator methionine" description="Removed" evidence="1">
    <location>
        <position position="1"/>
    </location>
</feature>
<feature type="chain" id="PRO_0000133958" description="Enolase">
    <location>
        <begin position="2"/>
        <end position="432"/>
    </location>
</feature>
<feature type="active site" description="Proton donor" evidence="2">
    <location>
        <position position="209"/>
    </location>
</feature>
<feature type="active site" description="Proton acceptor" evidence="2">
    <location>
        <position position="342"/>
    </location>
</feature>
<feature type="binding site" evidence="2">
    <location>
        <position position="167"/>
    </location>
    <ligand>
        <name>(2R)-2-phosphoglycerate</name>
        <dbReference type="ChEBI" id="CHEBI:58289"/>
    </ligand>
</feature>
<feature type="binding site" evidence="2">
    <location>
        <position position="246"/>
    </location>
    <ligand>
        <name>Mg(2+)</name>
        <dbReference type="ChEBI" id="CHEBI:18420"/>
    </ligand>
</feature>
<feature type="binding site" evidence="2">
    <location>
        <position position="290"/>
    </location>
    <ligand>
        <name>Mg(2+)</name>
        <dbReference type="ChEBI" id="CHEBI:18420"/>
    </ligand>
</feature>
<feature type="binding site" evidence="2">
    <location>
        <position position="317"/>
    </location>
    <ligand>
        <name>Mg(2+)</name>
        <dbReference type="ChEBI" id="CHEBI:18420"/>
    </ligand>
</feature>
<feature type="binding site" evidence="2">
    <location>
        <position position="342"/>
    </location>
    <ligand>
        <name>(2R)-2-phosphoglycerate</name>
        <dbReference type="ChEBI" id="CHEBI:58289"/>
    </ligand>
</feature>
<feature type="binding site" evidence="2">
    <location>
        <position position="371"/>
    </location>
    <ligand>
        <name>(2R)-2-phosphoglycerate</name>
        <dbReference type="ChEBI" id="CHEBI:58289"/>
    </ligand>
</feature>
<feature type="binding site" evidence="2">
    <location>
        <position position="372"/>
    </location>
    <ligand>
        <name>(2R)-2-phosphoglycerate</name>
        <dbReference type="ChEBI" id="CHEBI:58289"/>
    </ligand>
</feature>
<feature type="binding site" evidence="2">
    <location>
        <position position="393"/>
    </location>
    <ligand>
        <name>(2R)-2-phosphoglycerate</name>
        <dbReference type="ChEBI" id="CHEBI:58289"/>
    </ligand>
</feature>